<protein>
    <recommendedName>
        <fullName evidence="1">UPF0434 protein YcaR</fullName>
    </recommendedName>
</protein>
<gene>
    <name evidence="1" type="primary">ycaR</name>
    <name type="ordered locus">EcolC_2679</name>
</gene>
<sequence>MDHRLLEIIACPVCNGKLWYNQEKQELICKLDNLAFPLRDGIPVLLETEARVLTADESKS</sequence>
<reference key="1">
    <citation type="submission" date="2008-02" db="EMBL/GenBank/DDBJ databases">
        <title>Complete sequence of Escherichia coli C str. ATCC 8739.</title>
        <authorList>
            <person name="Copeland A."/>
            <person name="Lucas S."/>
            <person name="Lapidus A."/>
            <person name="Glavina del Rio T."/>
            <person name="Dalin E."/>
            <person name="Tice H."/>
            <person name="Bruce D."/>
            <person name="Goodwin L."/>
            <person name="Pitluck S."/>
            <person name="Kiss H."/>
            <person name="Brettin T."/>
            <person name="Detter J.C."/>
            <person name="Han C."/>
            <person name="Kuske C.R."/>
            <person name="Schmutz J."/>
            <person name="Larimer F."/>
            <person name="Land M."/>
            <person name="Hauser L."/>
            <person name="Kyrpides N."/>
            <person name="Mikhailova N."/>
            <person name="Ingram L."/>
            <person name="Richardson P."/>
        </authorList>
    </citation>
    <scope>NUCLEOTIDE SEQUENCE [LARGE SCALE GENOMIC DNA]</scope>
    <source>
        <strain>ATCC 8739 / DSM 1576 / NBRC 3972 / NCIMB 8545 / WDCM 00012 / Crooks</strain>
    </source>
</reference>
<accession>B1IW14</accession>
<name>YCAR_ECOLC</name>
<proteinExistence type="inferred from homology"/>
<comment type="similarity">
    <text evidence="1">Belongs to the UPF0434 family.</text>
</comment>
<feature type="chain" id="PRO_1000085456" description="UPF0434 protein YcaR">
    <location>
        <begin position="1"/>
        <end position="60"/>
    </location>
</feature>
<evidence type="ECO:0000255" key="1">
    <source>
        <dbReference type="HAMAP-Rule" id="MF_01187"/>
    </source>
</evidence>
<organism>
    <name type="scientific">Escherichia coli (strain ATCC 8739 / DSM 1576 / NBRC 3972 / NCIMB 8545 / WDCM 00012 / Crooks)</name>
    <dbReference type="NCBI Taxonomy" id="481805"/>
    <lineage>
        <taxon>Bacteria</taxon>
        <taxon>Pseudomonadati</taxon>
        <taxon>Pseudomonadota</taxon>
        <taxon>Gammaproteobacteria</taxon>
        <taxon>Enterobacterales</taxon>
        <taxon>Enterobacteriaceae</taxon>
        <taxon>Escherichia</taxon>
    </lineage>
</organism>
<dbReference type="EMBL" id="CP000946">
    <property type="protein sequence ID" value="ACA78308.1"/>
    <property type="molecule type" value="Genomic_DNA"/>
</dbReference>
<dbReference type="RefSeq" id="WP_000350058.1">
    <property type="nucleotide sequence ID" value="NZ_MTFT01000009.1"/>
</dbReference>
<dbReference type="SMR" id="B1IW14"/>
<dbReference type="GeneID" id="93776498"/>
<dbReference type="KEGG" id="ecl:EcolC_2679"/>
<dbReference type="HOGENOM" id="CLU_155659_3_1_6"/>
<dbReference type="GO" id="GO:0005829">
    <property type="term" value="C:cytosol"/>
    <property type="evidence" value="ECO:0007669"/>
    <property type="project" value="TreeGrafter"/>
</dbReference>
<dbReference type="FunFam" id="2.20.25.10:FF:000002">
    <property type="entry name" value="UPF0434 protein YcaR"/>
    <property type="match status" value="1"/>
</dbReference>
<dbReference type="Gene3D" id="2.20.25.10">
    <property type="match status" value="1"/>
</dbReference>
<dbReference type="HAMAP" id="MF_01187">
    <property type="entry name" value="UPF0434"/>
    <property type="match status" value="1"/>
</dbReference>
<dbReference type="InterPro" id="IPR005651">
    <property type="entry name" value="Trm112-like"/>
</dbReference>
<dbReference type="NCBIfam" id="NF008806">
    <property type="entry name" value="PRK11827.1"/>
    <property type="match status" value="1"/>
</dbReference>
<dbReference type="PANTHER" id="PTHR33505:SF4">
    <property type="entry name" value="PROTEIN PREY, MITOCHONDRIAL"/>
    <property type="match status" value="1"/>
</dbReference>
<dbReference type="PANTHER" id="PTHR33505">
    <property type="entry name" value="ZGC:162634"/>
    <property type="match status" value="1"/>
</dbReference>
<dbReference type="Pfam" id="PF03966">
    <property type="entry name" value="Trm112p"/>
    <property type="match status" value="1"/>
</dbReference>
<dbReference type="SUPFAM" id="SSF158997">
    <property type="entry name" value="Trm112p-like"/>
    <property type="match status" value="1"/>
</dbReference>